<evidence type="ECO:0000250" key="1"/>
<evidence type="ECO:0000250" key="2">
    <source>
        <dbReference type="UniProtKB" id="Q9H2V7"/>
    </source>
</evidence>
<evidence type="ECO:0000255" key="3"/>
<evidence type="ECO:0000256" key="4">
    <source>
        <dbReference type="SAM" id="MobiDB-lite"/>
    </source>
</evidence>
<evidence type="ECO:0000269" key="5">
    <source>
    </source>
</evidence>
<evidence type="ECO:0000303" key="6">
    <source>
    </source>
</evidence>
<evidence type="ECO:0000305" key="7"/>
<protein>
    <recommendedName>
        <fullName>Protein spinster homolog 1</fullName>
    </recommendedName>
    <alternativeName>
        <fullName>MSpin1</fullName>
    </alternativeName>
    <alternativeName>
        <fullName evidence="6">Spns1</fullName>
    </alternativeName>
</protein>
<name>SPNS1_MOUSE</name>
<feature type="initiator methionine" description="Removed" evidence="2">
    <location>
        <position position="1"/>
    </location>
</feature>
<feature type="chain" id="PRO_0000305040" description="Protein spinster homolog 1">
    <location>
        <begin position="2"/>
        <end position="528"/>
    </location>
</feature>
<feature type="transmembrane region" description="Helical" evidence="3">
    <location>
        <begin position="60"/>
        <end position="80"/>
    </location>
</feature>
<feature type="transmembrane region" description="Helical" evidence="3">
    <location>
        <begin position="98"/>
        <end position="118"/>
    </location>
</feature>
<feature type="transmembrane region" description="Helical" evidence="3">
    <location>
        <begin position="126"/>
        <end position="146"/>
    </location>
</feature>
<feature type="transmembrane region" description="Helical" evidence="3">
    <location>
        <begin position="160"/>
        <end position="180"/>
    </location>
</feature>
<feature type="transmembrane region" description="Helical" evidence="3">
    <location>
        <begin position="187"/>
        <end position="207"/>
    </location>
</feature>
<feature type="transmembrane region" description="Helical" evidence="3">
    <location>
        <begin position="218"/>
        <end position="238"/>
    </location>
</feature>
<feature type="transmembrane region" description="Helical" evidence="3">
    <location>
        <begin position="278"/>
        <end position="298"/>
    </location>
</feature>
<feature type="transmembrane region" description="Helical" evidence="3">
    <location>
        <begin position="323"/>
        <end position="343"/>
    </location>
</feature>
<feature type="transmembrane region" description="Helical" evidence="3">
    <location>
        <begin position="357"/>
        <end position="377"/>
    </location>
</feature>
<feature type="transmembrane region" description="Helical" evidence="3">
    <location>
        <begin position="381"/>
        <end position="401"/>
    </location>
</feature>
<feature type="transmembrane region" description="Helical" evidence="3">
    <location>
        <begin position="421"/>
        <end position="441"/>
    </location>
</feature>
<feature type="transmembrane region" description="Helical" evidence="3">
    <location>
        <begin position="465"/>
        <end position="485"/>
    </location>
</feature>
<feature type="region of interest" description="Disordered" evidence="4">
    <location>
        <begin position="1"/>
        <end position="38"/>
    </location>
</feature>
<feature type="modified residue" description="N-acetylalanine" evidence="2">
    <location>
        <position position="2"/>
    </location>
</feature>
<feature type="modified residue" description="Phosphoserine" evidence="2">
    <location>
        <position position="518"/>
    </location>
</feature>
<feature type="sequence conflict" description="In Ref. 2; BAE39125." evidence="7" ref="2">
    <original>L</original>
    <variation>I</variation>
    <location>
        <position position="60"/>
    </location>
</feature>
<feature type="sequence conflict" description="In Ref. 3; AAH02297." evidence="7" ref="3">
    <original>R</original>
    <variation>K</variation>
    <location>
        <position position="121"/>
    </location>
</feature>
<feature type="sequence conflict" description="In Ref. 1; AAG43831." evidence="7" ref="1">
    <original>L</original>
    <variation>F</variation>
    <location>
        <position position="127"/>
    </location>
</feature>
<feature type="sequence conflict" description="In Ref. 1; AAG43831." evidence="7" ref="1">
    <original>L</original>
    <variation>F</variation>
    <location>
        <position position="154"/>
    </location>
</feature>
<feature type="sequence conflict" description="In Ref. 1; AAG43831." evidence="7" ref="1">
    <original>L</original>
    <variation>M</variation>
    <location>
        <position position="159"/>
    </location>
</feature>
<feature type="sequence conflict" description="In Ref. 1; AAG43831." evidence="7" ref="1">
    <original>L</original>
    <variation>F</variation>
    <location>
        <position position="178"/>
    </location>
</feature>
<feature type="sequence conflict" description="In Ref. 1; AAG43831." evidence="7" ref="1">
    <original>V</original>
    <variation>M</variation>
    <location>
        <position position="341"/>
    </location>
</feature>
<proteinExistence type="evidence at transcript level"/>
<sequence length="528" mass="56709">MAGSDTAPFLSQADDPDDGPAPGHPGLPGPMGNPKSGELEVPDCEGLQRITGLSRGHSTLIVVVLCYINLLNYMDRFTVAGVLTDIEQFFNIGDGSTGLIQTVFISSYMVLAPVFGYLGDRYNRKYLMCGGIAFWSLVTLGSSFIPREHFWLLLLTRGLVGVGEASYSTIAPTLIADLFVADQRSRMLSIFYFAIPVGSGLGYIAGSKVKDVAGDWHWALRVTPGLGVLAVLLLFLVVQEPPRGAVERHSGSPPLSPTSWWADLKALARNPSFVLSSLGFTSVAFVTGSLALWAPAFLLRSRVVLGETPPCLPGDSCSSSDSLIFGLITCLTGVLGVGLGVEISRRLRRFNPRADPLVCAAGLLGSAPFLFLALACARGSIVATYIFIFIGETLLSMNWAIVADILLYVVIPTRRSTAEAFQIVLSHLLGDAGSPYLIGLISDRLRRSWPPSFLSEFRALQFSLMLCAFVGALGGAAFLGTAMFIEDDRRRAQLHVQGLLHESGPSDDRIVVPQRGRSTRVPVSSVLI</sequence>
<organism>
    <name type="scientific">Mus musculus</name>
    <name type="common">Mouse</name>
    <dbReference type="NCBI Taxonomy" id="10090"/>
    <lineage>
        <taxon>Eukaryota</taxon>
        <taxon>Metazoa</taxon>
        <taxon>Chordata</taxon>
        <taxon>Craniata</taxon>
        <taxon>Vertebrata</taxon>
        <taxon>Euteleostomi</taxon>
        <taxon>Mammalia</taxon>
        <taxon>Eutheria</taxon>
        <taxon>Euarchontoglires</taxon>
        <taxon>Glires</taxon>
        <taxon>Rodentia</taxon>
        <taxon>Myomorpha</taxon>
        <taxon>Muroidea</taxon>
        <taxon>Muridae</taxon>
        <taxon>Murinae</taxon>
        <taxon>Mus</taxon>
        <taxon>Mus</taxon>
    </lineage>
</organism>
<reference key="1">
    <citation type="journal article" date="2001" name="Mol. Cell. Biol.">
        <title>Mutations in the novel membrane protein spinster interfere with programmed cell death and cause neural degeneration in Drosophila melanogaster.</title>
        <authorList>
            <person name="Nakano Y."/>
            <person name="Fujitani K."/>
            <person name="Kurihara J."/>
            <person name="Ragan J."/>
            <person name="Usui-Aoki K."/>
            <person name="Shimoda L."/>
            <person name="Lukacsovich T."/>
            <person name="Suzuki K."/>
            <person name="Sezaki M."/>
            <person name="Sano Y."/>
            <person name="Ueda R."/>
            <person name="Awano W."/>
            <person name="Kaneda M."/>
            <person name="Umeda M."/>
            <person name="Yamamoto D."/>
        </authorList>
    </citation>
    <scope>NUCLEOTIDE SEQUENCE [MRNA]</scope>
</reference>
<reference key="2">
    <citation type="journal article" date="2005" name="Science">
        <title>The transcriptional landscape of the mammalian genome.</title>
        <authorList>
            <person name="Carninci P."/>
            <person name="Kasukawa T."/>
            <person name="Katayama S."/>
            <person name="Gough J."/>
            <person name="Frith M.C."/>
            <person name="Maeda N."/>
            <person name="Oyama R."/>
            <person name="Ravasi T."/>
            <person name="Lenhard B."/>
            <person name="Wells C."/>
            <person name="Kodzius R."/>
            <person name="Shimokawa K."/>
            <person name="Bajic V.B."/>
            <person name="Brenner S.E."/>
            <person name="Batalov S."/>
            <person name="Forrest A.R."/>
            <person name="Zavolan M."/>
            <person name="Davis M.J."/>
            <person name="Wilming L.G."/>
            <person name="Aidinis V."/>
            <person name="Allen J.E."/>
            <person name="Ambesi-Impiombato A."/>
            <person name="Apweiler R."/>
            <person name="Aturaliya R.N."/>
            <person name="Bailey T.L."/>
            <person name="Bansal M."/>
            <person name="Baxter L."/>
            <person name="Beisel K.W."/>
            <person name="Bersano T."/>
            <person name="Bono H."/>
            <person name="Chalk A.M."/>
            <person name="Chiu K.P."/>
            <person name="Choudhary V."/>
            <person name="Christoffels A."/>
            <person name="Clutterbuck D.R."/>
            <person name="Crowe M.L."/>
            <person name="Dalla E."/>
            <person name="Dalrymple B.P."/>
            <person name="de Bono B."/>
            <person name="Della Gatta G."/>
            <person name="di Bernardo D."/>
            <person name="Down T."/>
            <person name="Engstrom P."/>
            <person name="Fagiolini M."/>
            <person name="Faulkner G."/>
            <person name="Fletcher C.F."/>
            <person name="Fukushima T."/>
            <person name="Furuno M."/>
            <person name="Futaki S."/>
            <person name="Gariboldi M."/>
            <person name="Georgii-Hemming P."/>
            <person name="Gingeras T.R."/>
            <person name="Gojobori T."/>
            <person name="Green R.E."/>
            <person name="Gustincich S."/>
            <person name="Harbers M."/>
            <person name="Hayashi Y."/>
            <person name="Hensch T.K."/>
            <person name="Hirokawa N."/>
            <person name="Hill D."/>
            <person name="Huminiecki L."/>
            <person name="Iacono M."/>
            <person name="Ikeo K."/>
            <person name="Iwama A."/>
            <person name="Ishikawa T."/>
            <person name="Jakt M."/>
            <person name="Kanapin A."/>
            <person name="Katoh M."/>
            <person name="Kawasawa Y."/>
            <person name="Kelso J."/>
            <person name="Kitamura H."/>
            <person name="Kitano H."/>
            <person name="Kollias G."/>
            <person name="Krishnan S.P."/>
            <person name="Kruger A."/>
            <person name="Kummerfeld S.K."/>
            <person name="Kurochkin I.V."/>
            <person name="Lareau L.F."/>
            <person name="Lazarevic D."/>
            <person name="Lipovich L."/>
            <person name="Liu J."/>
            <person name="Liuni S."/>
            <person name="McWilliam S."/>
            <person name="Madan Babu M."/>
            <person name="Madera M."/>
            <person name="Marchionni L."/>
            <person name="Matsuda H."/>
            <person name="Matsuzawa S."/>
            <person name="Miki H."/>
            <person name="Mignone F."/>
            <person name="Miyake S."/>
            <person name="Morris K."/>
            <person name="Mottagui-Tabar S."/>
            <person name="Mulder N."/>
            <person name="Nakano N."/>
            <person name="Nakauchi H."/>
            <person name="Ng P."/>
            <person name="Nilsson R."/>
            <person name="Nishiguchi S."/>
            <person name="Nishikawa S."/>
            <person name="Nori F."/>
            <person name="Ohara O."/>
            <person name="Okazaki Y."/>
            <person name="Orlando V."/>
            <person name="Pang K.C."/>
            <person name="Pavan W.J."/>
            <person name="Pavesi G."/>
            <person name="Pesole G."/>
            <person name="Petrovsky N."/>
            <person name="Piazza S."/>
            <person name="Reed J."/>
            <person name="Reid J.F."/>
            <person name="Ring B.Z."/>
            <person name="Ringwald M."/>
            <person name="Rost B."/>
            <person name="Ruan Y."/>
            <person name="Salzberg S.L."/>
            <person name="Sandelin A."/>
            <person name="Schneider C."/>
            <person name="Schoenbach C."/>
            <person name="Sekiguchi K."/>
            <person name="Semple C.A."/>
            <person name="Seno S."/>
            <person name="Sessa L."/>
            <person name="Sheng Y."/>
            <person name="Shibata Y."/>
            <person name="Shimada H."/>
            <person name="Shimada K."/>
            <person name="Silva D."/>
            <person name="Sinclair B."/>
            <person name="Sperling S."/>
            <person name="Stupka E."/>
            <person name="Sugiura K."/>
            <person name="Sultana R."/>
            <person name="Takenaka Y."/>
            <person name="Taki K."/>
            <person name="Tammoja K."/>
            <person name="Tan S.L."/>
            <person name="Tang S."/>
            <person name="Taylor M.S."/>
            <person name="Tegner J."/>
            <person name="Teichmann S.A."/>
            <person name="Ueda H.R."/>
            <person name="van Nimwegen E."/>
            <person name="Verardo R."/>
            <person name="Wei C.L."/>
            <person name="Yagi K."/>
            <person name="Yamanishi H."/>
            <person name="Zabarovsky E."/>
            <person name="Zhu S."/>
            <person name="Zimmer A."/>
            <person name="Hide W."/>
            <person name="Bult C."/>
            <person name="Grimmond S.M."/>
            <person name="Teasdale R.D."/>
            <person name="Liu E.T."/>
            <person name="Brusic V."/>
            <person name="Quackenbush J."/>
            <person name="Wahlestedt C."/>
            <person name="Mattick J.S."/>
            <person name="Hume D.A."/>
            <person name="Kai C."/>
            <person name="Sasaki D."/>
            <person name="Tomaru Y."/>
            <person name="Fukuda S."/>
            <person name="Kanamori-Katayama M."/>
            <person name="Suzuki M."/>
            <person name="Aoki J."/>
            <person name="Arakawa T."/>
            <person name="Iida J."/>
            <person name="Imamura K."/>
            <person name="Itoh M."/>
            <person name="Kato T."/>
            <person name="Kawaji H."/>
            <person name="Kawagashira N."/>
            <person name="Kawashima T."/>
            <person name="Kojima M."/>
            <person name="Kondo S."/>
            <person name="Konno H."/>
            <person name="Nakano K."/>
            <person name="Ninomiya N."/>
            <person name="Nishio T."/>
            <person name="Okada M."/>
            <person name="Plessy C."/>
            <person name="Shibata K."/>
            <person name="Shiraki T."/>
            <person name="Suzuki S."/>
            <person name="Tagami M."/>
            <person name="Waki K."/>
            <person name="Watahiki A."/>
            <person name="Okamura-Oho Y."/>
            <person name="Suzuki H."/>
            <person name="Kawai J."/>
            <person name="Hayashizaki Y."/>
        </authorList>
    </citation>
    <scope>NUCLEOTIDE SEQUENCE [LARGE SCALE MRNA]</scope>
    <source>
        <strain>C57BL/6J</strain>
        <strain>Czech II</strain>
        <tissue>Mammary tumor</tissue>
    </source>
</reference>
<reference key="3">
    <citation type="journal article" date="2004" name="Genome Res.">
        <title>The status, quality, and expansion of the NIH full-length cDNA project: the Mammalian Gene Collection (MGC).</title>
        <authorList>
            <consortium name="The MGC Project Team"/>
        </authorList>
    </citation>
    <scope>NUCLEOTIDE SEQUENCE [LARGE SCALE MRNA]</scope>
    <source>
        <strain>C57BL/6J</strain>
        <strain>FVB/N</strain>
        <tissue>Brain</tissue>
        <tissue>Kidney</tissue>
    </source>
</reference>
<reference key="4">
    <citation type="journal article" date="2022" name="Proc. Natl. Acad. Sci. U.S.A.">
        <title>Spns1 is a lysophospholipid transporter mediating lysosomal phospholipid salvage.</title>
        <authorList>
            <person name="He M."/>
            <person name="Kuk A.C.Y."/>
            <person name="Ding M."/>
            <person name="Chin C.F."/>
            <person name="Galam D.L.A."/>
            <person name="Nah J.M."/>
            <person name="Tan B.C."/>
            <person name="Yeo H.L."/>
            <person name="Chua G.L."/>
            <person name="Benke P.I."/>
            <person name="Wenk M.R."/>
            <person name="Ho L."/>
            <person name="Torta F."/>
            <person name="Silver D.L."/>
        </authorList>
    </citation>
    <scope>FUNCTION</scope>
    <scope>TRANSPORTER ACTIVITY</scope>
    <scope>TISSUE SPECIFICITY</scope>
    <scope>SUBCELLULAR LOCATION</scope>
</reference>
<comment type="function">
    <text evidence="2 5">Plays a critical role in the phospholipid salvage pathway from lysosomes to the cytosol (PubMed:36161949). Mediates the rate-limiting, proton-dependent, lysosomal efflux of lysophospholipids, which can then be reacylated by acyltransferases in the endoplasmic reticulum to form phospholipids (PubMed:36161949). Selective for zwitterionic headgroups such as lysophosphatidylcholine (LPC) and lysophosphatidylethanolamine (LPE), can also transport lysophosphatidylglycerol (LPG), but not other anionic lysophospholipids, sphingosine, nor sphingomyelin (PubMed:36161949). Transports lysophospholipids with saturated, monounsaturated, and polyunsaturated fatty acids, such as 1-hexadecanoyl-sn-glycero-3-phosphocholine, 1-(9Z-octadecenoyl)-sn-glycero-3-phosphocholine and 1-(4Z,7Z,10Z,13Z,16Z,19Z-docosahexaenoyl)-sn-glycero-3-phosphocholine, respectively (PubMed:36161949). Can also transport lysoplasmalogen (LPC with a fatty alcohol) such as 1-(1Z-hexadecenyl)-sn-glycero-3-phosphocholine. Essential player in lysosomal homeostasis (PubMed:36161949). Crucial for cell survival under conditions of nutrient limitation. May be involved in necrotic or autophagic cell death (By similarity).</text>
</comment>
<comment type="catalytic activity">
    <reaction evidence="5">
        <text>a 1-acyl-sn-glycero-3-phosphocholine(out) + H(+)(out) = a 1-acyl-sn-glycero-3-phosphocholine(in) + H(+)(in)</text>
        <dbReference type="Rhea" id="RHEA:74435"/>
        <dbReference type="ChEBI" id="CHEBI:15378"/>
        <dbReference type="ChEBI" id="CHEBI:58168"/>
    </reaction>
</comment>
<comment type="catalytic activity">
    <reaction evidence="5">
        <text>1-hexadecanoyl-sn-glycero-3-phosphocholine(out) + H(+)(out) = 1-hexadecanoyl-sn-glycero-3-phosphocholine(in) + H(+)(in)</text>
        <dbReference type="Rhea" id="RHEA:74427"/>
        <dbReference type="ChEBI" id="CHEBI:15378"/>
        <dbReference type="ChEBI" id="CHEBI:72998"/>
    </reaction>
</comment>
<comment type="catalytic activity">
    <reaction evidence="5">
        <text>1-(9Z-octadecenoyl)-sn-glycero-3-phosphocholine(out) + H(+)(out) = 1-(9Z-octadecenoyl)-sn-glycero-3-phosphocholine(in) + H(+)(in)</text>
        <dbReference type="Rhea" id="RHEA:74411"/>
        <dbReference type="ChEBI" id="CHEBI:15378"/>
        <dbReference type="ChEBI" id="CHEBI:28610"/>
    </reaction>
</comment>
<comment type="catalytic activity">
    <reaction evidence="5">
        <text>1-(5Z,8Z,11Z,14Z-eicosatetraenoyl)-sn-glycero-3-phosphocholine(out) + H(+)(out) = 1-(5Z,8Z,11Z,14Z-eicosatetraenoyl)-sn-glycero-3-phosphocholine(in) + H(+)(in)</text>
        <dbReference type="Rhea" id="RHEA:74451"/>
        <dbReference type="ChEBI" id="CHEBI:15378"/>
        <dbReference type="ChEBI" id="CHEBI:74344"/>
    </reaction>
</comment>
<comment type="catalytic activity">
    <reaction evidence="5">
        <text>1-(4Z,7Z,10Z,13Z,16Z,19Z-docosahexaenoyl)-sn-glycero-3-phosphocholine(out) + H(+)(out) = 1-(4Z,7Z,10Z,13Z,16Z,19Z-docosahexaenoyl)-sn-glycero-3-phosphocholine(in) + H(+)(in)</text>
        <dbReference type="Rhea" id="RHEA:74423"/>
        <dbReference type="ChEBI" id="CHEBI:15378"/>
        <dbReference type="ChEBI" id="CHEBI:73873"/>
    </reaction>
</comment>
<comment type="catalytic activity">
    <reaction evidence="5">
        <text>a 1-acyl-sn-glycero-3-phosphoethanolamine(out) + H(+)(out) = a 1-acyl-sn-glycero-3-phosphoethanolamine(in) + H(+)(in)</text>
        <dbReference type="Rhea" id="RHEA:74439"/>
        <dbReference type="ChEBI" id="CHEBI:15378"/>
        <dbReference type="ChEBI" id="CHEBI:64381"/>
    </reaction>
</comment>
<comment type="catalytic activity">
    <reaction evidence="5">
        <text>1-(9Z-octadecenoyl)-sn-glycero-3-phosphoethanolamine(out) + H(+)(out) = 1-(9Z-octadecenoyl)-sn-glycero-3-phosphoethanolamine(in) + H(+)(in)</text>
        <dbReference type="Rhea" id="RHEA:74415"/>
        <dbReference type="ChEBI" id="CHEBI:15378"/>
        <dbReference type="ChEBI" id="CHEBI:74971"/>
    </reaction>
</comment>
<comment type="catalytic activity">
    <reaction evidence="2">
        <text>1-acyl-sn-glycero-3-phospho-(1'-sn-glycerol)(out) + H(+)(out) = 1-acyl-sn-glycero-3-phospho-(1'-sn-glycerol)(in) + H(+)(in)</text>
        <dbReference type="Rhea" id="RHEA:74443"/>
        <dbReference type="ChEBI" id="CHEBI:15378"/>
        <dbReference type="ChEBI" id="CHEBI:64840"/>
    </reaction>
</comment>
<comment type="catalytic activity">
    <reaction evidence="2">
        <text>1-(9Z-octadecenoyl)-sn-glycero-3-phospho-(1'-sn-glycerol)(out) + H(+)(out) = 1-(9Z-octadecenoyl)-sn-glycero-3-phospho-(1'-sn-glycerol)(in) + H(+)(in)</text>
        <dbReference type="Rhea" id="RHEA:74419"/>
        <dbReference type="ChEBI" id="CHEBI:15378"/>
        <dbReference type="ChEBI" id="CHEBI:72828"/>
    </reaction>
</comment>
<comment type="catalytic activity">
    <reaction evidence="5">
        <text>a 1-O-(1Z-alkenyl)-sn-glycero-3-phosphocholine(out) + H(+)(out) = a 1-O-(1Z-alkenyl)-sn-glycero-3-phosphocholine(in) + H(+)(in)</text>
        <dbReference type="Rhea" id="RHEA:74447"/>
        <dbReference type="ChEBI" id="CHEBI:15378"/>
        <dbReference type="ChEBI" id="CHEBI:77287"/>
    </reaction>
</comment>
<comment type="catalytic activity">
    <reaction evidence="5">
        <text>1-(1Z-hexadecenyl)-sn-glycero-3-phosphocholine(out) + H(+)(out) = 1-(1Z-hexadecenyl)-sn-glycero-3-phosphocholine(in) + H(+)(in)</text>
        <dbReference type="Rhea" id="RHEA:74431"/>
        <dbReference type="ChEBI" id="CHEBI:15378"/>
        <dbReference type="ChEBI" id="CHEBI:73850"/>
    </reaction>
</comment>
<comment type="catalytic activity">
    <reaction evidence="5">
        <text>a 1-O-(1Z-alkenyl)-sn-glycero-3-phosphoethanolamine(out) + H(+)(out) = a 1-O-(1Z-alkenyl)-sn-glycero-3-phosphoethanolamine(in) + H(+)(in)</text>
        <dbReference type="Rhea" id="RHEA:74455"/>
        <dbReference type="ChEBI" id="CHEBI:15378"/>
        <dbReference type="ChEBI" id="CHEBI:77288"/>
    </reaction>
</comment>
<comment type="catalytic activity">
    <reaction evidence="5">
        <text>1-O-(1Z-hexadecenyl)-sn-glycero-3-phosphoethanolamine(out) + H(+)(out) = 1-O-(1Z-hexadecenyl)-sn-glycero-3-phosphoethanolamine(in) + H(+)(in)</text>
        <dbReference type="Rhea" id="RHEA:74459"/>
        <dbReference type="ChEBI" id="CHEBI:15378"/>
        <dbReference type="ChEBI" id="CHEBI:133139"/>
    </reaction>
</comment>
<comment type="subunit">
    <text evidence="1">Interacts with BCL2 and BCL2L1.</text>
</comment>
<comment type="subcellular location">
    <subcellularLocation>
        <location evidence="5">Lysosome membrane</location>
        <topology evidence="1">Multi-pass membrane protein</topology>
    </subcellularLocation>
</comment>
<comment type="tissue specificity">
    <text evidence="5">Expressed in liver (at mRNA and protein levels).</text>
</comment>
<comment type="similarity">
    <text evidence="7">Belongs to the major facilitator superfamily. Spinster (TC 2.A.1.49) family.</text>
</comment>
<gene>
    <name type="primary">Spns1</name>
</gene>
<accession>Q8R0G7</accession>
<accession>Q3TKM0</accession>
<accession>Q99LN7</accession>
<accession>Q9EQK0</accession>
<keyword id="KW-0007">Acetylation</keyword>
<keyword id="KW-0445">Lipid transport</keyword>
<keyword id="KW-0458">Lysosome</keyword>
<keyword id="KW-0472">Membrane</keyword>
<keyword id="KW-0597">Phosphoprotein</keyword>
<keyword id="KW-1185">Reference proteome</keyword>
<keyword id="KW-0812">Transmembrane</keyword>
<keyword id="KW-1133">Transmembrane helix</keyword>
<keyword id="KW-0813">Transport</keyword>
<dbReference type="EMBL" id="AF212372">
    <property type="protein sequence ID" value="AAG43831.1"/>
    <property type="molecule type" value="mRNA"/>
</dbReference>
<dbReference type="EMBL" id="AK166931">
    <property type="protein sequence ID" value="BAE39125.1"/>
    <property type="molecule type" value="mRNA"/>
</dbReference>
<dbReference type="EMBL" id="BC002297">
    <property type="protein sequence ID" value="AAH02297.1"/>
    <property type="molecule type" value="mRNA"/>
</dbReference>
<dbReference type="EMBL" id="BC026854">
    <property type="protein sequence ID" value="AAH26854.1"/>
    <property type="molecule type" value="mRNA"/>
</dbReference>
<dbReference type="EMBL" id="BC085491">
    <property type="protein sequence ID" value="AAH85491.1"/>
    <property type="molecule type" value="mRNA"/>
</dbReference>
<dbReference type="CCDS" id="CCDS21826.1"/>
<dbReference type="RefSeq" id="NP_076201.2">
    <property type="nucleotide sequence ID" value="NM_023712.3"/>
</dbReference>
<dbReference type="SMR" id="Q8R0G7"/>
<dbReference type="BioGRID" id="216172">
    <property type="interactions" value="1"/>
</dbReference>
<dbReference type="FunCoup" id="Q8R0G7">
    <property type="interactions" value="1908"/>
</dbReference>
<dbReference type="STRING" id="10090.ENSMUSP00000032994"/>
<dbReference type="GlyGen" id="Q8R0G7">
    <property type="glycosylation" value="1 site"/>
</dbReference>
<dbReference type="iPTMnet" id="Q8R0G7"/>
<dbReference type="PhosphoSitePlus" id="Q8R0G7"/>
<dbReference type="SwissPalm" id="Q8R0G7"/>
<dbReference type="jPOST" id="Q8R0G7"/>
<dbReference type="PaxDb" id="10090-ENSMUSP00000032994"/>
<dbReference type="ProteomicsDB" id="261573"/>
<dbReference type="Pumba" id="Q8R0G7"/>
<dbReference type="Antibodypedia" id="26665">
    <property type="antibodies" value="78 antibodies from 19 providers"/>
</dbReference>
<dbReference type="DNASU" id="73658"/>
<dbReference type="Ensembl" id="ENSMUST00000032994.15">
    <property type="protein sequence ID" value="ENSMUSP00000032994.9"/>
    <property type="gene ID" value="ENSMUSG00000030741.16"/>
</dbReference>
<dbReference type="GeneID" id="73658"/>
<dbReference type="KEGG" id="mmu:73658"/>
<dbReference type="UCSC" id="uc009jqy.3">
    <property type="organism name" value="mouse"/>
</dbReference>
<dbReference type="AGR" id="MGI:1920908"/>
<dbReference type="CTD" id="83985"/>
<dbReference type="MGI" id="MGI:1920908">
    <property type="gene designation" value="Spns1"/>
</dbReference>
<dbReference type="VEuPathDB" id="HostDB:ENSMUSG00000030741"/>
<dbReference type="eggNOG" id="KOG1330">
    <property type="taxonomic scope" value="Eukaryota"/>
</dbReference>
<dbReference type="GeneTree" id="ENSGT00390000005976"/>
<dbReference type="InParanoid" id="Q8R0G7"/>
<dbReference type="OMA" id="YICAAGL"/>
<dbReference type="OrthoDB" id="6770063at2759"/>
<dbReference type="PhylomeDB" id="Q8R0G7"/>
<dbReference type="TreeFam" id="TF314395"/>
<dbReference type="BioGRID-ORCS" id="73658">
    <property type="hits" value="7 hits in 80 CRISPR screens"/>
</dbReference>
<dbReference type="ChiTaRS" id="Spns1">
    <property type="organism name" value="mouse"/>
</dbReference>
<dbReference type="PRO" id="PR:Q8R0G7"/>
<dbReference type="Proteomes" id="UP000000589">
    <property type="component" value="Chromosome 7"/>
</dbReference>
<dbReference type="RNAct" id="Q8R0G7">
    <property type="molecule type" value="protein"/>
</dbReference>
<dbReference type="Bgee" id="ENSMUSG00000030741">
    <property type="expression patterns" value="Expressed in yolk sac and 228 other cell types or tissues"/>
</dbReference>
<dbReference type="ExpressionAtlas" id="Q8R0G7">
    <property type="expression patterns" value="baseline and differential"/>
</dbReference>
<dbReference type="GO" id="GO:0005765">
    <property type="term" value="C:lysosomal membrane"/>
    <property type="evidence" value="ECO:0007669"/>
    <property type="project" value="UniProtKB-SubCell"/>
</dbReference>
<dbReference type="GO" id="GO:0005764">
    <property type="term" value="C:lysosome"/>
    <property type="evidence" value="ECO:0000315"/>
    <property type="project" value="MGI"/>
</dbReference>
<dbReference type="GO" id="GO:0022857">
    <property type="term" value="F:transmembrane transporter activity"/>
    <property type="evidence" value="ECO:0007669"/>
    <property type="project" value="InterPro"/>
</dbReference>
<dbReference type="GO" id="GO:0051977">
    <property type="term" value="P:lysophospholipid transport"/>
    <property type="evidence" value="ECO:0000315"/>
    <property type="project" value="MGI"/>
</dbReference>
<dbReference type="GO" id="GO:0033700">
    <property type="term" value="P:phospholipid efflux"/>
    <property type="evidence" value="ECO:0000315"/>
    <property type="project" value="MGI"/>
</dbReference>
<dbReference type="GO" id="GO:0035751">
    <property type="term" value="P:regulation of lysosomal lumen pH"/>
    <property type="evidence" value="ECO:0000315"/>
    <property type="project" value="MGI"/>
</dbReference>
<dbReference type="CDD" id="cd17328">
    <property type="entry name" value="MFS_spinster_like"/>
    <property type="match status" value="1"/>
</dbReference>
<dbReference type="FunFam" id="1.20.1250.20:FF:000097">
    <property type="entry name" value="protein spinster homolog 1"/>
    <property type="match status" value="1"/>
</dbReference>
<dbReference type="Gene3D" id="1.20.1250.20">
    <property type="entry name" value="MFS general substrate transporter like domains"/>
    <property type="match status" value="1"/>
</dbReference>
<dbReference type="InterPro" id="IPR011701">
    <property type="entry name" value="MFS"/>
</dbReference>
<dbReference type="InterPro" id="IPR020846">
    <property type="entry name" value="MFS_dom"/>
</dbReference>
<dbReference type="InterPro" id="IPR044770">
    <property type="entry name" value="MFS_spinster-like"/>
</dbReference>
<dbReference type="InterPro" id="IPR036259">
    <property type="entry name" value="MFS_trans_sf"/>
</dbReference>
<dbReference type="PANTHER" id="PTHR23505:SF13">
    <property type="entry name" value="PROTEIN SPINSTER HOMOLOG 1"/>
    <property type="match status" value="1"/>
</dbReference>
<dbReference type="PANTHER" id="PTHR23505">
    <property type="entry name" value="SPINSTER"/>
    <property type="match status" value="1"/>
</dbReference>
<dbReference type="Pfam" id="PF07690">
    <property type="entry name" value="MFS_1"/>
    <property type="match status" value="1"/>
</dbReference>
<dbReference type="SUPFAM" id="SSF103473">
    <property type="entry name" value="MFS general substrate transporter"/>
    <property type="match status" value="1"/>
</dbReference>
<dbReference type="PROSITE" id="PS50850">
    <property type="entry name" value="MFS"/>
    <property type="match status" value="1"/>
</dbReference>